<protein>
    <recommendedName>
        <fullName>Cytochrome bo(3) ubiquinol oxidase subunit 2</fullName>
    </recommendedName>
    <alternativeName>
        <fullName>Cytochrome o ubiquinol oxidase subunit 2</fullName>
        <shortName>Cytochrome o subunit 2</shortName>
    </alternativeName>
    <alternativeName>
        <fullName>Oxidase bo(3) subunit 2</fullName>
    </alternativeName>
    <alternativeName>
        <fullName>Ubiquinol oxidase polypeptide II</fullName>
    </alternativeName>
    <alternativeName>
        <fullName>Ubiquinol oxidase subunit 2</fullName>
    </alternativeName>
</protein>
<feature type="signal peptide" evidence="2">
    <location>
        <begin position="1"/>
        <end position="24"/>
    </location>
</feature>
<feature type="chain" id="PRO_0000006074" description="Cytochrome bo(3) ubiquinol oxidase subunit 2">
    <location>
        <begin position="25"/>
        <end position="286"/>
    </location>
</feature>
<feature type="topological domain" description="Extracellular" evidence="2">
    <location>
        <begin position="25"/>
        <end position="44"/>
    </location>
</feature>
<feature type="transmembrane region" description="Helical" evidence="2">
    <location>
        <begin position="45"/>
        <end position="67"/>
    </location>
</feature>
<feature type="topological domain" description="Cytoplasmic" evidence="2">
    <location>
        <begin position="68"/>
        <end position="85"/>
    </location>
</feature>
<feature type="transmembrane region" description="Helical" evidence="2">
    <location>
        <begin position="86"/>
        <end position="108"/>
    </location>
</feature>
<feature type="topological domain" description="Extracellular" evidence="2">
    <location>
        <begin position="109"/>
        <end position="286"/>
    </location>
</feature>
<feature type="lipid moiety-binding region" description="N-palmitoyl cysteine" evidence="2">
    <location>
        <position position="25"/>
    </location>
</feature>
<feature type="lipid moiety-binding region" description="S-diacylglycerol cysteine" evidence="2">
    <location>
        <position position="25"/>
    </location>
</feature>
<dbReference type="EMBL" id="AE016826">
    <property type="protein sequence ID" value="AAO27127.1"/>
    <property type="status" value="ALT_INIT"/>
    <property type="molecule type" value="Genomic_DNA"/>
</dbReference>
<dbReference type="RefSeq" id="WP_044010653.1">
    <property type="nucleotide sequence ID" value="NC_004545.1"/>
</dbReference>
<dbReference type="SMR" id="Q89AA3"/>
<dbReference type="STRING" id="224915.bbp_417"/>
<dbReference type="KEGG" id="bab:bbp_417"/>
<dbReference type="eggNOG" id="COG1622">
    <property type="taxonomic scope" value="Bacteria"/>
</dbReference>
<dbReference type="HOGENOM" id="CLU_036876_6_1_6"/>
<dbReference type="OrthoDB" id="9783445at2"/>
<dbReference type="Proteomes" id="UP000000601">
    <property type="component" value="Chromosome"/>
</dbReference>
<dbReference type="GO" id="GO:0005886">
    <property type="term" value="C:plasma membrane"/>
    <property type="evidence" value="ECO:0007669"/>
    <property type="project" value="UniProtKB-SubCell"/>
</dbReference>
<dbReference type="GO" id="GO:0005507">
    <property type="term" value="F:copper ion binding"/>
    <property type="evidence" value="ECO:0007669"/>
    <property type="project" value="InterPro"/>
</dbReference>
<dbReference type="GO" id="GO:0009486">
    <property type="term" value="F:cytochrome bo3 ubiquinol oxidase activity"/>
    <property type="evidence" value="ECO:0007669"/>
    <property type="project" value="InterPro"/>
</dbReference>
<dbReference type="GO" id="GO:0004129">
    <property type="term" value="F:cytochrome-c oxidase activity"/>
    <property type="evidence" value="ECO:0007669"/>
    <property type="project" value="InterPro"/>
</dbReference>
<dbReference type="GO" id="GO:0016682">
    <property type="term" value="F:oxidoreductase activity, acting on diphenols and related substances as donors, oxygen as acceptor"/>
    <property type="evidence" value="ECO:0007669"/>
    <property type="project" value="InterPro"/>
</dbReference>
<dbReference type="GO" id="GO:0042773">
    <property type="term" value="P:ATP synthesis coupled electron transport"/>
    <property type="evidence" value="ECO:0007669"/>
    <property type="project" value="TreeGrafter"/>
</dbReference>
<dbReference type="CDD" id="cd04212">
    <property type="entry name" value="CuRO_UO_II"/>
    <property type="match status" value="1"/>
</dbReference>
<dbReference type="Gene3D" id="1.10.287.90">
    <property type="match status" value="1"/>
</dbReference>
<dbReference type="Gene3D" id="2.60.40.420">
    <property type="entry name" value="Cupredoxins - blue copper proteins"/>
    <property type="match status" value="1"/>
</dbReference>
<dbReference type="InterPro" id="IPR045187">
    <property type="entry name" value="CcO_II"/>
</dbReference>
<dbReference type="InterPro" id="IPR002429">
    <property type="entry name" value="CcO_II-like_C"/>
</dbReference>
<dbReference type="InterPro" id="IPR010514">
    <property type="entry name" value="COX_ARM"/>
</dbReference>
<dbReference type="InterPro" id="IPR008972">
    <property type="entry name" value="Cupredoxin"/>
</dbReference>
<dbReference type="InterPro" id="IPR034227">
    <property type="entry name" value="CuRO_UO_II"/>
</dbReference>
<dbReference type="InterPro" id="IPR011759">
    <property type="entry name" value="Cyt_c_oxidase_su2_TM_dom"/>
</dbReference>
<dbReference type="InterPro" id="IPR036257">
    <property type="entry name" value="Cyt_c_oxidase_su2_TM_sf"/>
</dbReference>
<dbReference type="InterPro" id="IPR006333">
    <property type="entry name" value="Cyt_o_ubiquinol_oxidase_su2"/>
</dbReference>
<dbReference type="NCBIfam" id="TIGR01433">
    <property type="entry name" value="CyoA"/>
    <property type="match status" value="1"/>
</dbReference>
<dbReference type="PANTHER" id="PTHR22888:SF18">
    <property type="entry name" value="CYTOCHROME BO(3) UBIQUINOL OXIDASE SUBUNIT 2"/>
    <property type="match status" value="1"/>
</dbReference>
<dbReference type="PANTHER" id="PTHR22888">
    <property type="entry name" value="CYTOCHROME C OXIDASE, SUBUNIT II"/>
    <property type="match status" value="1"/>
</dbReference>
<dbReference type="Pfam" id="PF00116">
    <property type="entry name" value="COX2"/>
    <property type="match status" value="1"/>
</dbReference>
<dbReference type="Pfam" id="PF06481">
    <property type="entry name" value="COX_ARM"/>
    <property type="match status" value="1"/>
</dbReference>
<dbReference type="PIRSF" id="PIRSF000292">
    <property type="entry name" value="Ubi_od_II"/>
    <property type="match status" value="1"/>
</dbReference>
<dbReference type="SUPFAM" id="SSF49503">
    <property type="entry name" value="Cupredoxins"/>
    <property type="match status" value="1"/>
</dbReference>
<dbReference type="SUPFAM" id="SSF81464">
    <property type="entry name" value="Cytochrome c oxidase subunit II-like, transmembrane region"/>
    <property type="match status" value="1"/>
</dbReference>
<dbReference type="PROSITE" id="PS50857">
    <property type="entry name" value="COX2_CUA"/>
    <property type="match status" value="1"/>
</dbReference>
<dbReference type="PROSITE" id="PS50999">
    <property type="entry name" value="COX2_TM"/>
    <property type="match status" value="1"/>
</dbReference>
<name>CYOA_BUCBP</name>
<organism>
    <name type="scientific">Buchnera aphidicola subsp. Baizongia pistaciae (strain Bp)</name>
    <dbReference type="NCBI Taxonomy" id="224915"/>
    <lineage>
        <taxon>Bacteria</taxon>
        <taxon>Pseudomonadati</taxon>
        <taxon>Pseudomonadota</taxon>
        <taxon>Gammaproteobacteria</taxon>
        <taxon>Enterobacterales</taxon>
        <taxon>Erwiniaceae</taxon>
        <taxon>Buchnera</taxon>
    </lineage>
</organism>
<evidence type="ECO:0000250" key="1"/>
<evidence type="ECO:0000255" key="2"/>
<evidence type="ECO:0000305" key="3"/>
<proteinExistence type="inferred from homology"/>
<keyword id="KW-1003">Cell membrane</keyword>
<keyword id="KW-0249">Electron transport</keyword>
<keyword id="KW-0449">Lipoprotein</keyword>
<keyword id="KW-0472">Membrane</keyword>
<keyword id="KW-0560">Oxidoreductase</keyword>
<keyword id="KW-0564">Palmitate</keyword>
<keyword id="KW-1185">Reference proteome</keyword>
<keyword id="KW-0679">Respiratory chain</keyword>
<keyword id="KW-0732">Signal</keyword>
<keyword id="KW-0812">Transmembrane</keyword>
<keyword id="KW-1133">Transmembrane helix</keyword>
<keyword id="KW-0813">Transport</keyword>
<accession>Q89AA3</accession>
<gene>
    <name type="primary">cyoA</name>
    <name type="ordered locus">bbp_417</name>
</gene>
<sequence length="286" mass="33106">MQFIKYKSYILKFLLVSCIFCINGCDCTILCPNGLIAQEQRFVLFVSFFTMLLIIIPVIFMTIFFVLRYRESNFSKTYDPKWSHSNIIELLIWGIPIIIIVFLSIFSWKSVHDLDPKKPIVSNVQPIKINVISLDWKWLFIYPDQKIATINKLIIPINTPIIFNLTSGSVMNSFFIPSLGSQIYVMPGMKTNLNLIANKLGQFKGFSSNYSGKGFSNMKFDVLVTSDHIFFYEWVKKIQKSKYKLNSMYQFNQLAIPSDNNAIKYFSNLKENLFNVVIANVLKISL</sequence>
<comment type="function">
    <text evidence="1">Cytochrome bo(3) ubiquinol terminal oxidase is the component of the aerobic respiratory chain of E.coli that predominates when cells are grown at high aeration. Has proton pump activity across the membrane in addition to electron transfer, pumping 2 protons/electron (By similarity).</text>
</comment>
<comment type="subunit">
    <text evidence="1">Heterooctamer of two A chains, two B chains, two C chains and two D chains.</text>
</comment>
<comment type="subcellular location">
    <subcellularLocation>
        <location evidence="1">Cell membrane</location>
        <topology evidence="1">Multi-pass membrane protein</topology>
    </subcellularLocation>
</comment>
<comment type="similarity">
    <text evidence="3">Belongs to the cytochrome c oxidase subunit 2 family.</text>
</comment>
<comment type="sequence caution" evidence="3">
    <conflict type="erroneous initiation">
        <sequence resource="EMBL-CDS" id="AAO27127"/>
    </conflict>
    <text>Extended N-terminus.</text>
</comment>
<reference key="1">
    <citation type="journal article" date="2003" name="Proc. Natl. Acad. Sci. U.S.A.">
        <title>Reductive genome evolution in Buchnera aphidicola.</title>
        <authorList>
            <person name="van Ham R.C.H.J."/>
            <person name="Kamerbeek J."/>
            <person name="Palacios C."/>
            <person name="Rausell C."/>
            <person name="Abascal F."/>
            <person name="Bastolla U."/>
            <person name="Fernandez J.M."/>
            <person name="Jimenez L."/>
            <person name="Postigo M."/>
            <person name="Silva F.J."/>
            <person name="Tamames J."/>
            <person name="Viguera E."/>
            <person name="Latorre A."/>
            <person name="Valencia A."/>
            <person name="Moran F."/>
            <person name="Moya A."/>
        </authorList>
    </citation>
    <scope>NUCLEOTIDE SEQUENCE [LARGE SCALE GENOMIC DNA]</scope>
    <source>
        <strain>Bp</strain>
    </source>
</reference>